<feature type="chain" id="PRO_0000260738" description="6-phospho-beta-galactosidase">
    <location>
        <begin position="1"/>
        <end position="468"/>
    </location>
</feature>
<feature type="active site" description="Proton donor" evidence="1">
    <location>
        <position position="160"/>
    </location>
</feature>
<feature type="active site" description="Nucleophile" evidence="1">
    <location>
        <position position="375"/>
    </location>
</feature>
<feature type="binding site" evidence="1">
    <location>
        <position position="19"/>
    </location>
    <ligand>
        <name>D-galactose 6-phosphate</name>
        <dbReference type="ChEBI" id="CHEBI:91004"/>
    </ligand>
</feature>
<feature type="binding site" evidence="1">
    <location>
        <position position="116"/>
    </location>
    <ligand>
        <name>D-galactose 6-phosphate</name>
        <dbReference type="ChEBI" id="CHEBI:91004"/>
    </ligand>
</feature>
<feature type="binding site" evidence="1">
    <location>
        <position position="159"/>
    </location>
    <ligand>
        <name>D-galactose 6-phosphate</name>
        <dbReference type="ChEBI" id="CHEBI:91004"/>
    </ligand>
</feature>
<feature type="binding site" evidence="1">
    <location>
        <position position="160"/>
    </location>
    <ligand>
        <name>D-galactose 6-phosphate</name>
        <dbReference type="ChEBI" id="CHEBI:91004"/>
    </ligand>
</feature>
<feature type="binding site" evidence="1">
    <location>
        <position position="297"/>
    </location>
    <ligand>
        <name>D-galactose 6-phosphate</name>
        <dbReference type="ChEBI" id="CHEBI:91004"/>
    </ligand>
</feature>
<feature type="binding site" evidence="1">
    <location>
        <position position="428"/>
    </location>
    <ligand>
        <name>D-galactose 6-phosphate</name>
        <dbReference type="ChEBI" id="CHEBI:91004"/>
    </ligand>
</feature>
<feature type="binding site" evidence="1">
    <location>
        <position position="429"/>
    </location>
    <ligand>
        <name>D-galactose 6-phosphate</name>
        <dbReference type="ChEBI" id="CHEBI:91004"/>
    </ligand>
</feature>
<feature type="binding site" evidence="1">
    <location>
        <position position="435"/>
    </location>
    <ligand>
        <name>D-galactose 6-phosphate</name>
        <dbReference type="ChEBI" id="CHEBI:91004"/>
    </ligand>
</feature>
<feature type="binding site" evidence="1">
    <location>
        <position position="437"/>
    </location>
    <ligand>
        <name>D-galactose 6-phosphate</name>
        <dbReference type="ChEBI" id="CHEBI:91004"/>
    </ligand>
</feature>
<comment type="catalytic activity">
    <reaction evidence="1">
        <text>a 6-phospho-beta-D-galactoside + H2O = D-galactose 6-phosphate + an alcohol</text>
        <dbReference type="Rhea" id="RHEA:24568"/>
        <dbReference type="ChEBI" id="CHEBI:15377"/>
        <dbReference type="ChEBI" id="CHEBI:30879"/>
        <dbReference type="ChEBI" id="CHEBI:58534"/>
        <dbReference type="ChEBI" id="CHEBI:91004"/>
        <dbReference type="EC" id="3.2.1.85"/>
    </reaction>
</comment>
<comment type="pathway">
    <text evidence="1">Carbohydrate metabolism; lactose degradation; D-galactose 6-phosphate and beta-D-glucose from lactose 6-phosphate: step 1/1.</text>
</comment>
<comment type="similarity">
    <text evidence="1">Belongs to the glycosyl hydrolase 1 family.</text>
</comment>
<gene>
    <name evidence="1" type="primary">lacG</name>
    <name type="ordered locus">MGAS10270_Spy1701</name>
</gene>
<reference key="1">
    <citation type="journal article" date="2006" name="Proc. Natl. Acad. Sci. U.S.A.">
        <title>Molecular genetic anatomy of inter- and intraserotype variation in the human bacterial pathogen group A Streptococcus.</title>
        <authorList>
            <person name="Beres S.B."/>
            <person name="Richter E.W."/>
            <person name="Nagiec M.J."/>
            <person name="Sumby P."/>
            <person name="Porcella S.F."/>
            <person name="DeLeo F.R."/>
            <person name="Musser J.M."/>
        </authorList>
    </citation>
    <scope>NUCLEOTIDE SEQUENCE [LARGE SCALE GENOMIC DNA]</scope>
    <source>
        <strain>MGAS10270</strain>
    </source>
</reference>
<organism>
    <name type="scientific">Streptococcus pyogenes serotype M2 (strain MGAS10270)</name>
    <dbReference type="NCBI Taxonomy" id="370552"/>
    <lineage>
        <taxon>Bacteria</taxon>
        <taxon>Bacillati</taxon>
        <taxon>Bacillota</taxon>
        <taxon>Bacilli</taxon>
        <taxon>Lactobacillales</taxon>
        <taxon>Streptococcaceae</taxon>
        <taxon>Streptococcus</taxon>
    </lineage>
</organism>
<keyword id="KW-0326">Glycosidase</keyword>
<keyword id="KW-0378">Hydrolase</keyword>
<sequence>MTKTLPKDFIFGGATAAYQAEGATHTDGKGPVAWDKYLEDNYWYTAEPASDFYNRYPVDLKLSEEFGVNGIRISIAWSRIFPTGKGEVNPKGVEYYHNLFAECHKRHVEPFVTLHHFDTPEALHSDGDFLNRENIEHFVNYAEFCFKEFSEVNYWTTFNEIGPIGDGQYLVGKFPPGIQYDLAKVFQSHHNMMVSHARAVKLFKDGGYSGEIGVVHALPTKYPFDANNPDDVRAAELEDIIHNKFILDATYLGKYSDKTMEGVNHILEVNGGELDLCEEDFAALDAAKDLNDFLGINYYMSDWMQAFDGETEIIHNGKGEKGSSKYQIKGVGRRKAPVDVPKTDWDWILFPQGLYDQIMRVKADYPNYKKIYITENGLGYKDEFVDNTVYDDGRIDYVKKHLEVISDAISDGVNVKGYFMWSLMDVFSWSNGYEKRYGLFYVDFETQERYPKKSAYWYKKVAETQVIE</sequence>
<proteinExistence type="inferred from homology"/>
<dbReference type="EC" id="3.2.1.85" evidence="1"/>
<dbReference type="EMBL" id="CP000260">
    <property type="protein sequence ID" value="ABF34766.1"/>
    <property type="molecule type" value="Genomic_DNA"/>
</dbReference>
<dbReference type="SMR" id="Q1JEZ3"/>
<dbReference type="CAZy" id="GH1">
    <property type="family name" value="Glycoside Hydrolase Family 1"/>
</dbReference>
<dbReference type="KEGG" id="sph:MGAS10270_Spy1701"/>
<dbReference type="HOGENOM" id="CLU_001859_1_3_9"/>
<dbReference type="UniPathway" id="UPA00542">
    <property type="reaction ID" value="UER00605"/>
</dbReference>
<dbReference type="Proteomes" id="UP000002436">
    <property type="component" value="Chromosome"/>
</dbReference>
<dbReference type="GO" id="GO:0005829">
    <property type="term" value="C:cytosol"/>
    <property type="evidence" value="ECO:0007669"/>
    <property type="project" value="TreeGrafter"/>
</dbReference>
<dbReference type="GO" id="GO:0033920">
    <property type="term" value="F:6-phospho-beta-galactosidase activity"/>
    <property type="evidence" value="ECO:0007669"/>
    <property type="project" value="UniProtKB-UniRule"/>
</dbReference>
<dbReference type="GO" id="GO:0008422">
    <property type="term" value="F:beta-glucosidase activity"/>
    <property type="evidence" value="ECO:0007669"/>
    <property type="project" value="TreeGrafter"/>
</dbReference>
<dbReference type="GO" id="GO:0019512">
    <property type="term" value="P:lactose catabolic process via tagatose-6-phosphate"/>
    <property type="evidence" value="ECO:0007669"/>
    <property type="project" value="InterPro"/>
</dbReference>
<dbReference type="FunFam" id="3.20.20.80:FF:000004">
    <property type="entry name" value="Beta-glucosidase 6-phospho-beta-glucosidase"/>
    <property type="match status" value="1"/>
</dbReference>
<dbReference type="Gene3D" id="3.20.20.80">
    <property type="entry name" value="Glycosidases"/>
    <property type="match status" value="1"/>
</dbReference>
<dbReference type="HAMAP" id="MF_01574">
    <property type="entry name" value="LacG"/>
    <property type="match status" value="1"/>
</dbReference>
<dbReference type="InterPro" id="IPR005928">
    <property type="entry name" value="6P-beta-galactosidase"/>
</dbReference>
<dbReference type="InterPro" id="IPR001360">
    <property type="entry name" value="Glyco_hydro_1"/>
</dbReference>
<dbReference type="InterPro" id="IPR018120">
    <property type="entry name" value="Glyco_hydro_1_AS"/>
</dbReference>
<dbReference type="InterPro" id="IPR033132">
    <property type="entry name" value="Glyco_hydro_1_N_CS"/>
</dbReference>
<dbReference type="InterPro" id="IPR017853">
    <property type="entry name" value="Glycoside_hydrolase_SF"/>
</dbReference>
<dbReference type="NCBIfam" id="TIGR01233">
    <property type="entry name" value="lacG"/>
    <property type="match status" value="1"/>
</dbReference>
<dbReference type="NCBIfam" id="NF010036">
    <property type="entry name" value="PRK13511.1"/>
    <property type="match status" value="1"/>
</dbReference>
<dbReference type="PANTHER" id="PTHR10353">
    <property type="entry name" value="GLYCOSYL HYDROLASE"/>
    <property type="match status" value="1"/>
</dbReference>
<dbReference type="PANTHER" id="PTHR10353:SF36">
    <property type="entry name" value="LP05116P"/>
    <property type="match status" value="1"/>
</dbReference>
<dbReference type="Pfam" id="PF00232">
    <property type="entry name" value="Glyco_hydro_1"/>
    <property type="match status" value="1"/>
</dbReference>
<dbReference type="PRINTS" id="PR00131">
    <property type="entry name" value="GLHYDRLASE1"/>
</dbReference>
<dbReference type="SUPFAM" id="SSF51445">
    <property type="entry name" value="(Trans)glycosidases"/>
    <property type="match status" value="1"/>
</dbReference>
<dbReference type="PROSITE" id="PS00572">
    <property type="entry name" value="GLYCOSYL_HYDROL_F1_1"/>
    <property type="match status" value="1"/>
</dbReference>
<dbReference type="PROSITE" id="PS00653">
    <property type="entry name" value="GLYCOSYL_HYDROL_F1_2"/>
    <property type="match status" value="1"/>
</dbReference>
<name>LACG_STRPD</name>
<accession>Q1JEZ3</accession>
<evidence type="ECO:0000255" key="1">
    <source>
        <dbReference type="HAMAP-Rule" id="MF_01574"/>
    </source>
</evidence>
<protein>
    <recommendedName>
        <fullName evidence="1">6-phospho-beta-galactosidase</fullName>
        <ecNumber evidence="1">3.2.1.85</ecNumber>
    </recommendedName>
    <alternativeName>
        <fullName evidence="1">Beta-D-phosphogalactoside galactohydrolase</fullName>
        <shortName evidence="1">PGALase</shortName>
    </alternativeName>
    <alternativeName>
        <fullName evidence="1">P-beta-Gal</fullName>
        <shortName evidence="1">PBG</shortName>
    </alternativeName>
</protein>